<protein>
    <recommendedName>
        <fullName evidence="1">Outer-membrane lipoprotein carrier protein</fullName>
    </recommendedName>
</protein>
<comment type="function">
    <text evidence="1">Participates in the translocation of lipoproteins from the inner membrane to the outer membrane. Only forms a complex with a lipoprotein if the residue after the N-terminal Cys is not an aspartate (The Asp acts as a targeting signal to indicate that the lipoprotein should stay in the inner membrane).</text>
</comment>
<comment type="subunit">
    <text evidence="1">Monomer.</text>
</comment>
<comment type="subcellular location">
    <subcellularLocation>
        <location evidence="1">Periplasm</location>
    </subcellularLocation>
</comment>
<comment type="similarity">
    <text evidence="1">Belongs to the LolA family.</text>
</comment>
<evidence type="ECO:0000255" key="1">
    <source>
        <dbReference type="HAMAP-Rule" id="MF_00240"/>
    </source>
</evidence>
<organism>
    <name type="scientific">Ralstonia nicotianae (strain ATCC BAA-1114 / GMI1000)</name>
    <name type="common">Ralstonia solanacearum</name>
    <dbReference type="NCBI Taxonomy" id="267608"/>
    <lineage>
        <taxon>Bacteria</taxon>
        <taxon>Pseudomonadati</taxon>
        <taxon>Pseudomonadota</taxon>
        <taxon>Betaproteobacteria</taxon>
        <taxon>Burkholderiales</taxon>
        <taxon>Burkholderiaceae</taxon>
        <taxon>Ralstonia</taxon>
        <taxon>Ralstonia solanacearum species complex</taxon>
    </lineage>
</organism>
<name>LOLA_RALN1</name>
<reference key="1">
    <citation type="journal article" date="2002" name="Nature">
        <title>Genome sequence of the plant pathogen Ralstonia solanacearum.</title>
        <authorList>
            <person name="Salanoubat M."/>
            <person name="Genin S."/>
            <person name="Artiguenave F."/>
            <person name="Gouzy J."/>
            <person name="Mangenot S."/>
            <person name="Arlat M."/>
            <person name="Billault A."/>
            <person name="Brottier P."/>
            <person name="Camus J.-C."/>
            <person name="Cattolico L."/>
            <person name="Chandler M."/>
            <person name="Choisne N."/>
            <person name="Claudel-Renard C."/>
            <person name="Cunnac S."/>
            <person name="Demange N."/>
            <person name="Gaspin C."/>
            <person name="Lavie M."/>
            <person name="Moisan A."/>
            <person name="Robert C."/>
            <person name="Saurin W."/>
            <person name="Schiex T."/>
            <person name="Siguier P."/>
            <person name="Thebault P."/>
            <person name="Whalen M."/>
            <person name="Wincker P."/>
            <person name="Levy M."/>
            <person name="Weissenbach J."/>
            <person name="Boucher C.A."/>
        </authorList>
    </citation>
    <scope>NUCLEOTIDE SEQUENCE [LARGE SCALE GENOMIC DNA]</scope>
    <source>
        <strain>ATCC BAA-1114 / GMI1000</strain>
    </source>
</reference>
<gene>
    <name evidence="1" type="primary">lolA</name>
    <name type="ordered locus">RSc2340</name>
    <name type="ORF">RS01206</name>
</gene>
<proteinExistence type="inferred from homology"/>
<dbReference type="EMBL" id="AL646052">
    <property type="protein sequence ID" value="CAD16047.1"/>
    <property type="molecule type" value="Genomic_DNA"/>
</dbReference>
<dbReference type="RefSeq" id="WP_011002263.1">
    <property type="nucleotide sequence ID" value="NC_003295.1"/>
</dbReference>
<dbReference type="SMR" id="Q8XWY0"/>
<dbReference type="STRING" id="267608.RSc2340"/>
<dbReference type="TCDB" id="1.B.46.1.3">
    <property type="family name" value="the outer membrane lolab lipoprotein insertion apparatus (lolab) family"/>
</dbReference>
<dbReference type="EnsemblBacteria" id="CAD16047">
    <property type="protein sequence ID" value="CAD16047"/>
    <property type="gene ID" value="RSc2340"/>
</dbReference>
<dbReference type="KEGG" id="rso:RSc2340"/>
<dbReference type="eggNOG" id="COG2834">
    <property type="taxonomic scope" value="Bacteria"/>
</dbReference>
<dbReference type="HOGENOM" id="CLU_087560_0_1_4"/>
<dbReference type="Proteomes" id="UP000001436">
    <property type="component" value="Chromosome"/>
</dbReference>
<dbReference type="GO" id="GO:0042597">
    <property type="term" value="C:periplasmic space"/>
    <property type="evidence" value="ECO:0007669"/>
    <property type="project" value="UniProtKB-SubCell"/>
</dbReference>
<dbReference type="GO" id="GO:0044874">
    <property type="term" value="P:lipoprotein localization to outer membrane"/>
    <property type="evidence" value="ECO:0007669"/>
    <property type="project" value="UniProtKB-UniRule"/>
</dbReference>
<dbReference type="GO" id="GO:0042953">
    <property type="term" value="P:lipoprotein transport"/>
    <property type="evidence" value="ECO:0007669"/>
    <property type="project" value="InterPro"/>
</dbReference>
<dbReference type="CDD" id="cd16325">
    <property type="entry name" value="LolA"/>
    <property type="match status" value="1"/>
</dbReference>
<dbReference type="Gene3D" id="2.50.20.10">
    <property type="entry name" value="Lipoprotein localisation LolA/LolB/LppX"/>
    <property type="match status" value="1"/>
</dbReference>
<dbReference type="HAMAP" id="MF_00240">
    <property type="entry name" value="LolA"/>
    <property type="match status" value="1"/>
</dbReference>
<dbReference type="InterPro" id="IPR029046">
    <property type="entry name" value="LolA/LolB/LppX"/>
</dbReference>
<dbReference type="InterPro" id="IPR004564">
    <property type="entry name" value="OM_lipoprot_carrier_LolA-like"/>
</dbReference>
<dbReference type="InterPro" id="IPR018323">
    <property type="entry name" value="OM_lipoprot_carrier_LolA_Pbac"/>
</dbReference>
<dbReference type="NCBIfam" id="TIGR00547">
    <property type="entry name" value="lolA"/>
    <property type="match status" value="1"/>
</dbReference>
<dbReference type="NCBIfam" id="NF000661">
    <property type="entry name" value="PRK00031.1-3"/>
    <property type="match status" value="1"/>
</dbReference>
<dbReference type="PANTHER" id="PTHR35869">
    <property type="entry name" value="OUTER-MEMBRANE LIPOPROTEIN CARRIER PROTEIN"/>
    <property type="match status" value="1"/>
</dbReference>
<dbReference type="PANTHER" id="PTHR35869:SF1">
    <property type="entry name" value="OUTER-MEMBRANE LIPOPROTEIN CARRIER PROTEIN"/>
    <property type="match status" value="1"/>
</dbReference>
<dbReference type="Pfam" id="PF03548">
    <property type="entry name" value="LolA"/>
    <property type="match status" value="1"/>
</dbReference>
<dbReference type="SUPFAM" id="SSF89392">
    <property type="entry name" value="Prokaryotic lipoproteins and lipoprotein localization factors"/>
    <property type="match status" value="1"/>
</dbReference>
<sequence length="215" mass="23347">MFVLKARHLMAAGLVSLAAWSAGAQAGAIEQLNAFVSNVTTARGEFVQRQVKGGANGSPLRVAGTSSGDFTFSRPGRFVWRYLKPYEQQLSADGQMLYIYDKDLSQVTERKLDASLGSSPAAILFGSNDLAKNFVLKEGGTKDGIDWVELTPKAKDTQFERVAIGFRAGELEGMELRDAFGNTTLLTFSHIQKNPQLPASAFRFVPPKGADVIKQ</sequence>
<feature type="signal peptide" evidence="1">
    <location>
        <begin position="1"/>
        <end position="24"/>
    </location>
</feature>
<feature type="chain" id="PRO_0000018273" description="Outer-membrane lipoprotein carrier protein">
    <location>
        <begin position="25"/>
        <end position="215"/>
    </location>
</feature>
<keyword id="KW-0143">Chaperone</keyword>
<keyword id="KW-0574">Periplasm</keyword>
<keyword id="KW-0653">Protein transport</keyword>
<keyword id="KW-1185">Reference proteome</keyword>
<keyword id="KW-0732">Signal</keyword>
<keyword id="KW-0813">Transport</keyword>
<accession>Q8XWY0</accession>